<reference key="1">
    <citation type="journal article" date="2002" name="Environ. Microbiol.">
        <title>Complete genome sequence and comparative analysis of the metabolically versatile Pseudomonas putida KT2440.</title>
        <authorList>
            <person name="Nelson K.E."/>
            <person name="Weinel C."/>
            <person name="Paulsen I.T."/>
            <person name="Dodson R.J."/>
            <person name="Hilbert H."/>
            <person name="Martins dos Santos V.A.P."/>
            <person name="Fouts D.E."/>
            <person name="Gill S.R."/>
            <person name="Pop M."/>
            <person name="Holmes M."/>
            <person name="Brinkac L.M."/>
            <person name="Beanan M.J."/>
            <person name="DeBoy R.T."/>
            <person name="Daugherty S.C."/>
            <person name="Kolonay J.F."/>
            <person name="Madupu R."/>
            <person name="Nelson W.C."/>
            <person name="White O."/>
            <person name="Peterson J.D."/>
            <person name="Khouri H.M."/>
            <person name="Hance I."/>
            <person name="Chris Lee P."/>
            <person name="Holtzapple E.K."/>
            <person name="Scanlan D."/>
            <person name="Tran K."/>
            <person name="Moazzez A."/>
            <person name="Utterback T.R."/>
            <person name="Rizzo M."/>
            <person name="Lee K."/>
            <person name="Kosack D."/>
            <person name="Moestl D."/>
            <person name="Wedler H."/>
            <person name="Lauber J."/>
            <person name="Stjepandic D."/>
            <person name="Hoheisel J."/>
            <person name="Straetz M."/>
            <person name="Heim S."/>
            <person name="Kiewitz C."/>
            <person name="Eisen J.A."/>
            <person name="Timmis K.N."/>
            <person name="Duesterhoeft A."/>
            <person name="Tuemmler B."/>
            <person name="Fraser C.M."/>
        </authorList>
    </citation>
    <scope>NUCLEOTIDE SEQUENCE [LARGE SCALE GENOMIC DNA]</scope>
    <source>
        <strain>ATCC 47054 / DSM 6125 / CFBP 8728 / NCIMB 11950 / KT2440</strain>
    </source>
</reference>
<dbReference type="EMBL" id="AE015451">
    <property type="protein sequence ID" value="AAN68289.1"/>
    <property type="molecule type" value="Genomic_DNA"/>
</dbReference>
<dbReference type="RefSeq" id="NP_744825.1">
    <property type="nucleotide sequence ID" value="NC_002947.4"/>
</dbReference>
<dbReference type="SMR" id="Q88JG8"/>
<dbReference type="STRING" id="160488.PP_2681"/>
<dbReference type="PaxDb" id="160488-PP_2681"/>
<dbReference type="KEGG" id="ppu:PP_2681"/>
<dbReference type="PATRIC" id="fig|160488.4.peg.2843"/>
<dbReference type="HOGENOM" id="CLU_163864_2_1_6"/>
<dbReference type="OrthoDB" id="7356791at2"/>
<dbReference type="PhylomeDB" id="Q88JG8"/>
<dbReference type="BioCyc" id="PPUT160488:G1G01-2862-MONOMER"/>
<dbReference type="UniPathway" id="UPA00539"/>
<dbReference type="Proteomes" id="UP000000556">
    <property type="component" value="Chromosome"/>
</dbReference>
<dbReference type="GO" id="GO:0048038">
    <property type="term" value="F:quinone binding"/>
    <property type="evidence" value="ECO:0007669"/>
    <property type="project" value="InterPro"/>
</dbReference>
<dbReference type="GO" id="GO:0018189">
    <property type="term" value="P:pyrroloquinoline quinone biosynthetic process"/>
    <property type="evidence" value="ECO:0007669"/>
    <property type="project" value="UniProtKB-UniRule"/>
</dbReference>
<dbReference type="Gene3D" id="1.10.10.1150">
    <property type="entry name" value="Coenzyme PQQ synthesis protein D (PqqD)"/>
    <property type="match status" value="1"/>
</dbReference>
<dbReference type="HAMAP" id="MF_00655">
    <property type="entry name" value="PQQ_syn_PqqD"/>
    <property type="match status" value="1"/>
</dbReference>
<dbReference type="InterPro" id="IPR008792">
    <property type="entry name" value="PQQD"/>
</dbReference>
<dbReference type="InterPro" id="IPR022479">
    <property type="entry name" value="PqqD_bac"/>
</dbReference>
<dbReference type="InterPro" id="IPR041881">
    <property type="entry name" value="PqqD_sf"/>
</dbReference>
<dbReference type="NCBIfam" id="TIGR03859">
    <property type="entry name" value="PQQ_PqqD"/>
    <property type="match status" value="1"/>
</dbReference>
<dbReference type="NCBIfam" id="NF002535">
    <property type="entry name" value="PRK02079.1"/>
    <property type="match status" value="1"/>
</dbReference>
<dbReference type="Pfam" id="PF05402">
    <property type="entry name" value="PqqD"/>
    <property type="match status" value="1"/>
</dbReference>
<accession>Q88JG8</accession>
<name>PQQD2_PSEPK</name>
<protein>
    <recommendedName>
        <fullName>PqqA binding protein 2</fullName>
    </recommendedName>
    <alternativeName>
        <fullName>Coenzyme PQQ synthesis protein D 2</fullName>
    </alternativeName>
    <alternativeName>
        <fullName>Pyrroloquinoline quinone biosynthesis protein D 2</fullName>
    </alternativeName>
</protein>
<gene>
    <name type="primary">pqqD2</name>
    <name type="ordered locus">PP_2681</name>
</gene>
<evidence type="ECO:0000305" key="1"/>
<keyword id="KW-0884">PQQ biosynthesis</keyword>
<keyword id="KW-1185">Reference proteome</keyword>
<feature type="chain" id="PRO_0000219967" description="PqqA binding protein 2">
    <location>
        <begin position="1"/>
        <end position="90"/>
    </location>
</feature>
<organism>
    <name type="scientific">Pseudomonas putida (strain ATCC 47054 / DSM 6125 / CFBP 8728 / NCIMB 11950 / KT2440)</name>
    <dbReference type="NCBI Taxonomy" id="160488"/>
    <lineage>
        <taxon>Bacteria</taxon>
        <taxon>Pseudomonadati</taxon>
        <taxon>Pseudomonadota</taxon>
        <taxon>Gammaproteobacteria</taxon>
        <taxon>Pseudomonadales</taxon>
        <taxon>Pseudomonadaceae</taxon>
        <taxon>Pseudomonas</taxon>
    </lineage>
</organism>
<proteinExistence type="inferred from homology"/>
<comment type="function">
    <text>Functions as a PqqA binding protein and presents PqqA to PqqE, in the pyrroloquinoline quinone (PQQ) biosynthetic pathway.</text>
</comment>
<comment type="pathway">
    <text>Cofactor biosynthesis; pyrroloquinoline quinone biosynthesis.</text>
</comment>
<comment type="subunit">
    <text>Monomer. Interacts with PqqE.</text>
</comment>
<comment type="similarity">
    <text evidence="1">Belongs to the PqqD family.</text>
</comment>
<sequence length="90" mass="9992">MNLIDRQQALALGRGLRLDWEPRKACHVLLYAGGIIELNASAGWVLELLDGHSTVATVIDRLAQRFPNVPGLEEDVLAFLEVARAKSWIE</sequence>